<comment type="function">
    <text evidence="1">PsaD can form complexes with ferredoxin and ferredoxin-oxidoreductase in photosystem I (PS I) reaction center.</text>
</comment>
<comment type="subcellular location">
    <subcellularLocation>
        <location evidence="1">Plastid</location>
        <location evidence="1">Chloroplast thylakoid membrane</location>
        <topology evidence="1">Peripheral membrane protein</topology>
        <orientation evidence="1">Stromal side</orientation>
    </subcellularLocation>
</comment>
<comment type="similarity">
    <text evidence="2">Belongs to the PsaD family.</text>
</comment>
<feature type="chain" id="PRO_0000277307" description="Photosystem I reaction center subunit II">
    <location>
        <begin position="1"/>
        <end position="141"/>
    </location>
</feature>
<dbReference type="EMBL" id="AP006715">
    <property type="protein sequence ID" value="BAE92404.1"/>
    <property type="molecule type" value="Genomic_DNA"/>
</dbReference>
<dbReference type="RefSeq" id="YP_536961.1">
    <property type="nucleotide sequence ID" value="NC_007932.1"/>
</dbReference>
<dbReference type="SMR" id="Q1XDK7"/>
<dbReference type="GeneID" id="3978949"/>
<dbReference type="GO" id="GO:0009535">
    <property type="term" value="C:chloroplast thylakoid membrane"/>
    <property type="evidence" value="ECO:0007669"/>
    <property type="project" value="UniProtKB-SubCell"/>
</dbReference>
<dbReference type="GO" id="GO:0009538">
    <property type="term" value="C:photosystem I reaction center"/>
    <property type="evidence" value="ECO:0007669"/>
    <property type="project" value="InterPro"/>
</dbReference>
<dbReference type="GO" id="GO:0015979">
    <property type="term" value="P:photosynthesis"/>
    <property type="evidence" value="ECO:0007669"/>
    <property type="project" value="UniProtKB-KW"/>
</dbReference>
<dbReference type="Gene3D" id="3.30.1470.10">
    <property type="entry name" value="Photosystem I PsaD, reaction center subunit II"/>
    <property type="match status" value="1"/>
</dbReference>
<dbReference type="InterPro" id="IPR003685">
    <property type="entry name" value="PsaD"/>
</dbReference>
<dbReference type="InterPro" id="IPR036579">
    <property type="entry name" value="PsaD_sf"/>
</dbReference>
<dbReference type="PANTHER" id="PTHR31982:SF5">
    <property type="entry name" value="PHOTOSYSTEM I REACTION CENTER SUBUNIT II, CHLOROPLASTIC"/>
    <property type="match status" value="1"/>
</dbReference>
<dbReference type="PANTHER" id="PTHR31982">
    <property type="entry name" value="PHOTOSYSTEM I REACTION CENTER SUBUNIT II-1, CHLOROPLASTIC-RELATED"/>
    <property type="match status" value="1"/>
</dbReference>
<dbReference type="Pfam" id="PF02531">
    <property type="entry name" value="PsaD"/>
    <property type="match status" value="1"/>
</dbReference>
<dbReference type="SUPFAM" id="SSF64234">
    <property type="entry name" value="Photosystem I subunit PsaD"/>
    <property type="match status" value="1"/>
</dbReference>
<geneLocation type="chloroplast"/>
<keyword id="KW-0150">Chloroplast</keyword>
<keyword id="KW-0472">Membrane</keyword>
<keyword id="KW-0602">Photosynthesis</keyword>
<keyword id="KW-0603">Photosystem I</keyword>
<keyword id="KW-0934">Plastid</keyword>
<keyword id="KW-0793">Thylakoid</keyword>
<reference key="1">
    <citation type="submission" date="2003-11" db="EMBL/GenBank/DDBJ databases">
        <title>Whole genome sequence of Porphyra yezoensis chloroplast.</title>
        <authorList>
            <person name="Kunimoto M."/>
            <person name="Morishima K."/>
            <person name="Yoshikawa M."/>
            <person name="Fukuda S."/>
            <person name="Kobayashi T."/>
            <person name="Kobayashi M."/>
            <person name="Okazaki T."/>
            <person name="Ohara I."/>
            <person name="Nakayama I."/>
        </authorList>
    </citation>
    <scope>NUCLEOTIDE SEQUENCE [LARGE SCALE GENOMIC DNA]</scope>
    <source>
        <strain>U-51</strain>
    </source>
</reference>
<evidence type="ECO:0000250" key="1"/>
<evidence type="ECO:0000305" key="2"/>
<proteinExistence type="inferred from homology"/>
<sequence length="141" mass="15683">MPDTINLNMPSPTFGGSTGGWLRAAEVEEKYAITWTGKNESKFEMPTGGTATMRNGENLLYLAKKEQCLALGTQLKSKFKISDYKIYRVFPNGEVQYLHPKDGVFPEKVNTGRASVNSVDHSIGQNINPVDVKFMNKATYD</sequence>
<protein>
    <recommendedName>
        <fullName>Photosystem I reaction center subunit II</fullName>
    </recommendedName>
    <alternativeName>
        <fullName>Photosystem I 16 kDa polypeptide</fullName>
        <shortName>PSI-D</shortName>
    </alternativeName>
</protein>
<gene>
    <name type="primary">psaD</name>
</gene>
<accession>Q1XDK7</accession>
<name>PSAD_PYRYE</name>
<organism>
    <name type="scientific">Pyropia yezoensis</name>
    <name type="common">Susabi-nori</name>
    <name type="synonym">Porphyra yezoensis</name>
    <dbReference type="NCBI Taxonomy" id="2788"/>
    <lineage>
        <taxon>Eukaryota</taxon>
        <taxon>Rhodophyta</taxon>
        <taxon>Bangiophyceae</taxon>
        <taxon>Bangiales</taxon>
        <taxon>Bangiaceae</taxon>
        <taxon>Pyropia</taxon>
    </lineage>
</organism>